<feature type="chain" id="PRO_0000355579" description="Serine/threonine-protein kinase dst1">
    <location>
        <begin position="1"/>
        <end position="737"/>
    </location>
</feature>
<feature type="domain" description="Protein kinase" evidence="4">
    <location>
        <begin position="29"/>
        <end position="281"/>
    </location>
</feature>
<feature type="region of interest" description="Disordered" evidence="5">
    <location>
        <begin position="305"/>
        <end position="356"/>
    </location>
</feature>
<feature type="region of interest" description="Disordered" evidence="5">
    <location>
        <begin position="372"/>
        <end position="475"/>
    </location>
</feature>
<feature type="region of interest" description="Disordered" evidence="5">
    <location>
        <begin position="491"/>
        <end position="559"/>
    </location>
</feature>
<feature type="region of interest" description="Disordered" evidence="5">
    <location>
        <begin position="575"/>
        <end position="631"/>
    </location>
</feature>
<feature type="compositionally biased region" description="Low complexity" evidence="5">
    <location>
        <begin position="334"/>
        <end position="345"/>
    </location>
</feature>
<feature type="compositionally biased region" description="Low complexity" evidence="5">
    <location>
        <begin position="401"/>
        <end position="410"/>
    </location>
</feature>
<feature type="compositionally biased region" description="Low complexity" evidence="5">
    <location>
        <begin position="425"/>
        <end position="444"/>
    </location>
</feature>
<feature type="compositionally biased region" description="Low complexity" evidence="5">
    <location>
        <begin position="454"/>
        <end position="473"/>
    </location>
</feature>
<feature type="compositionally biased region" description="Polar residues" evidence="5">
    <location>
        <begin position="491"/>
        <end position="503"/>
    </location>
</feature>
<feature type="compositionally biased region" description="Low complexity" evidence="5">
    <location>
        <begin position="510"/>
        <end position="525"/>
    </location>
</feature>
<feature type="compositionally biased region" description="Polar residues" evidence="5">
    <location>
        <begin position="529"/>
        <end position="554"/>
    </location>
</feature>
<feature type="compositionally biased region" description="Polar residues" evidence="5">
    <location>
        <begin position="585"/>
        <end position="596"/>
    </location>
</feature>
<feature type="compositionally biased region" description="Low complexity" evidence="5">
    <location>
        <begin position="597"/>
        <end position="615"/>
    </location>
</feature>
<feature type="active site" description="Proton acceptor" evidence="3 4">
    <location>
        <position position="149"/>
    </location>
</feature>
<feature type="binding site" evidence="3 4">
    <location>
        <begin position="35"/>
        <end position="43"/>
    </location>
    <ligand>
        <name>ATP</name>
        <dbReference type="ChEBI" id="CHEBI:30616"/>
    </ligand>
</feature>
<feature type="binding site" evidence="3 4">
    <location>
        <position position="58"/>
    </location>
    <ligand>
        <name>ATP</name>
        <dbReference type="ChEBI" id="CHEBI:30616"/>
    </ligand>
</feature>
<proteinExistence type="inferred from homology"/>
<comment type="catalytic activity">
    <reaction evidence="2">
        <text>L-seryl-[protein] + ATP = O-phospho-L-seryl-[protein] + ADP + H(+)</text>
        <dbReference type="Rhea" id="RHEA:17989"/>
        <dbReference type="Rhea" id="RHEA-COMP:9863"/>
        <dbReference type="Rhea" id="RHEA-COMP:11604"/>
        <dbReference type="ChEBI" id="CHEBI:15378"/>
        <dbReference type="ChEBI" id="CHEBI:29999"/>
        <dbReference type="ChEBI" id="CHEBI:30616"/>
        <dbReference type="ChEBI" id="CHEBI:83421"/>
        <dbReference type="ChEBI" id="CHEBI:456216"/>
        <dbReference type="EC" id="2.7.11.1"/>
    </reaction>
</comment>
<comment type="catalytic activity">
    <reaction evidence="2">
        <text>L-threonyl-[protein] + ATP = O-phospho-L-threonyl-[protein] + ADP + H(+)</text>
        <dbReference type="Rhea" id="RHEA:46608"/>
        <dbReference type="Rhea" id="RHEA-COMP:11060"/>
        <dbReference type="Rhea" id="RHEA-COMP:11605"/>
        <dbReference type="ChEBI" id="CHEBI:15378"/>
        <dbReference type="ChEBI" id="CHEBI:30013"/>
        <dbReference type="ChEBI" id="CHEBI:30616"/>
        <dbReference type="ChEBI" id="CHEBI:61977"/>
        <dbReference type="ChEBI" id="CHEBI:456216"/>
        <dbReference type="EC" id="2.7.11.1"/>
    </reaction>
</comment>
<comment type="cofactor">
    <cofactor evidence="1">
        <name>Mg(2+)</name>
        <dbReference type="ChEBI" id="CHEBI:18420"/>
    </cofactor>
</comment>
<comment type="similarity">
    <text evidence="2">Belongs to the protein kinase superfamily. STE Ser/Thr protein kinase family. STE20 subfamily.</text>
</comment>
<protein>
    <recommendedName>
        <fullName evidence="2">Serine/threonine-protein kinase dst1</fullName>
        <ecNumber>2.7.11.1</ecNumber>
    </recommendedName>
</protein>
<keyword id="KW-0067">ATP-binding</keyword>
<keyword id="KW-0418">Kinase</keyword>
<keyword id="KW-0460">Magnesium</keyword>
<keyword id="KW-0479">Metal-binding</keyword>
<keyword id="KW-0547">Nucleotide-binding</keyword>
<keyword id="KW-1185">Reference proteome</keyword>
<keyword id="KW-0723">Serine/threonine-protein kinase</keyword>
<keyword id="KW-0808">Transferase</keyword>
<accession>Q86IX1</accession>
<accession>Q556A2</accession>
<sequence>MAIKKPINVKQLSDKLGVPILPDDPQTIYHIQERLGKGSFGQVFKAVHFANGKVVAIKIISLDDQEAIKDVRKEISILAECNYPNIVQYFGSYFKDHQLWIVMEYCGGGSVSDLLQVIDTISEDEIALICREALKGLNYLHEFKKIHRDIKGGNILLNDRGEVKLADFGVSAQLFNTFSKRNTFVGTPYWMAPEVIQENKYDGKADVWSLGITAIEMAEGLPPNSNVHPMRVIFMIPREESPALTDKSIWSDKFQDFISKCLTKDPAERPTAKELLNHEFIQTKKPLSILSDLVENCKTLINNSSMFEDEDEEEGNYSTFVEKKTPSDDEKENNNNTVTNYSTVITKDDDDGSNNYSTVITKDEMYSTVITKDDAQTDDDNNNFSTVITKEDPPTDEESDSSCSSSSSSSRNITSPISKRKPRQPITNSPKISPISSNNINKIPADNVVSSNQATTTTTTTTTTTTTAASTTTDQDEGDVKNIVNKFQLNKPITSSNSTSVTPQKPPFPSNNTTTTSNINTPIKPSNGLKKSNSNTPVQLKTSGDKTPTTTPLKNISNNNSVIYNNSNNINNNNNNNIIAPKSPSPTTGQKIIKTNSGGVLKSSGGLSSKRSPSSKPKHSSSSKEPKESLSENLQNIYRNDCTIQLPFLTLNNISSDYLLSIDYRYNDFKSSLDDLCADPNLISSKLSFSPYIGNLIKSLSYHKDIQENELMTPKESVQNTKIVNDLSSTVKTIFRL</sequence>
<organism>
    <name type="scientific">Dictyostelium discoideum</name>
    <name type="common">Social amoeba</name>
    <dbReference type="NCBI Taxonomy" id="44689"/>
    <lineage>
        <taxon>Eukaryota</taxon>
        <taxon>Amoebozoa</taxon>
        <taxon>Evosea</taxon>
        <taxon>Eumycetozoa</taxon>
        <taxon>Dictyostelia</taxon>
        <taxon>Dictyosteliales</taxon>
        <taxon>Dictyosteliaceae</taxon>
        <taxon>Dictyostelium</taxon>
    </lineage>
</organism>
<reference key="1">
    <citation type="journal article" date="2002" name="Nature">
        <title>Sequence and analysis of chromosome 2 of Dictyostelium discoideum.</title>
        <authorList>
            <person name="Gloeckner G."/>
            <person name="Eichinger L."/>
            <person name="Szafranski K."/>
            <person name="Pachebat J.A."/>
            <person name="Bankier A.T."/>
            <person name="Dear P.H."/>
            <person name="Lehmann R."/>
            <person name="Baumgart C."/>
            <person name="Parra G."/>
            <person name="Abril J.F."/>
            <person name="Guigo R."/>
            <person name="Kumpf K."/>
            <person name="Tunggal B."/>
            <person name="Cox E.C."/>
            <person name="Quail M.A."/>
            <person name="Platzer M."/>
            <person name="Rosenthal A."/>
            <person name="Noegel A.A."/>
        </authorList>
    </citation>
    <scope>NUCLEOTIDE SEQUENCE [LARGE SCALE GENOMIC DNA]</scope>
    <source>
        <strain>AX4</strain>
    </source>
</reference>
<reference evidence="8" key="2">
    <citation type="journal article" date="2005" name="Nature">
        <title>The genome of the social amoeba Dictyostelium discoideum.</title>
        <authorList>
            <person name="Eichinger L."/>
            <person name="Pachebat J.A."/>
            <person name="Gloeckner G."/>
            <person name="Rajandream M.A."/>
            <person name="Sucgang R."/>
            <person name="Berriman M."/>
            <person name="Song J."/>
            <person name="Olsen R."/>
            <person name="Szafranski K."/>
            <person name="Xu Q."/>
            <person name="Tunggal B."/>
            <person name="Kummerfeld S."/>
            <person name="Madera M."/>
            <person name="Konfortov B.A."/>
            <person name="Rivero F."/>
            <person name="Bankier A.T."/>
            <person name="Lehmann R."/>
            <person name="Hamlin N."/>
            <person name="Davies R."/>
            <person name="Gaudet P."/>
            <person name="Fey P."/>
            <person name="Pilcher K."/>
            <person name="Chen G."/>
            <person name="Saunders D."/>
            <person name="Sodergren E.J."/>
            <person name="Davis P."/>
            <person name="Kerhornou A."/>
            <person name="Nie X."/>
            <person name="Hall N."/>
            <person name="Anjard C."/>
            <person name="Hemphill L."/>
            <person name="Bason N."/>
            <person name="Farbrother P."/>
            <person name="Desany B."/>
            <person name="Just E."/>
            <person name="Morio T."/>
            <person name="Rost R."/>
            <person name="Churcher C.M."/>
            <person name="Cooper J."/>
            <person name="Haydock S."/>
            <person name="van Driessche N."/>
            <person name="Cronin A."/>
            <person name="Goodhead I."/>
            <person name="Muzny D.M."/>
            <person name="Mourier T."/>
            <person name="Pain A."/>
            <person name="Lu M."/>
            <person name="Harper D."/>
            <person name="Lindsay R."/>
            <person name="Hauser H."/>
            <person name="James K.D."/>
            <person name="Quiles M."/>
            <person name="Madan Babu M."/>
            <person name="Saito T."/>
            <person name="Buchrieser C."/>
            <person name="Wardroper A."/>
            <person name="Felder M."/>
            <person name="Thangavelu M."/>
            <person name="Johnson D."/>
            <person name="Knights A."/>
            <person name="Loulseged H."/>
            <person name="Mungall K.L."/>
            <person name="Oliver K."/>
            <person name="Price C."/>
            <person name="Quail M.A."/>
            <person name="Urushihara H."/>
            <person name="Hernandez J."/>
            <person name="Rabbinowitsch E."/>
            <person name="Steffen D."/>
            <person name="Sanders M."/>
            <person name="Ma J."/>
            <person name="Kohara Y."/>
            <person name="Sharp S."/>
            <person name="Simmonds M.N."/>
            <person name="Spiegler S."/>
            <person name="Tivey A."/>
            <person name="Sugano S."/>
            <person name="White B."/>
            <person name="Walker D."/>
            <person name="Woodward J.R."/>
            <person name="Winckler T."/>
            <person name="Tanaka Y."/>
            <person name="Shaulsky G."/>
            <person name="Schleicher M."/>
            <person name="Weinstock G.M."/>
            <person name="Rosenthal A."/>
            <person name="Cox E.C."/>
            <person name="Chisholm R.L."/>
            <person name="Gibbs R.A."/>
            <person name="Loomis W.F."/>
            <person name="Platzer M."/>
            <person name="Kay R.R."/>
            <person name="Williams J.G."/>
            <person name="Dear P.H."/>
            <person name="Noegel A.A."/>
            <person name="Barrell B.G."/>
            <person name="Kuspa A."/>
        </authorList>
    </citation>
    <scope>NUCLEOTIDE SEQUENCE [LARGE SCALE GENOMIC DNA]</scope>
    <source>
        <strain evidence="8">AX4</strain>
    </source>
</reference>
<reference evidence="7" key="3">
    <citation type="journal article" date="2006" name="Eur. J. Cell Biol.">
        <title>Characterization of the Ste20-like kinase Krs1 of Dictyostelium discoideum.</title>
        <authorList>
            <person name="Arasada R."/>
            <person name="Son H."/>
            <person name="Ramalingam N."/>
            <person name="Eichinger L."/>
            <person name="Schleicher M."/>
            <person name="Rohlfs M."/>
        </authorList>
    </citation>
    <scope>IDENTIFICATION</scope>
</reference>
<gene>
    <name evidence="8" type="primary">dst1</name>
    <name evidence="6" type="synonym">dstA</name>
    <name type="ORF">DDB_G0274593</name>
</gene>
<name>DST1_DICDI</name>
<evidence type="ECO:0000250" key="1"/>
<evidence type="ECO:0000250" key="2">
    <source>
        <dbReference type="UniProtKB" id="O61125"/>
    </source>
</evidence>
<evidence type="ECO:0000250" key="3">
    <source>
        <dbReference type="UniProtKB" id="P28523"/>
    </source>
</evidence>
<evidence type="ECO:0000255" key="4">
    <source>
        <dbReference type="PROSITE-ProRule" id="PRU00159"/>
    </source>
</evidence>
<evidence type="ECO:0000256" key="5">
    <source>
        <dbReference type="SAM" id="MobiDB-lite"/>
    </source>
</evidence>
<evidence type="ECO:0000303" key="6">
    <source>
    </source>
</evidence>
<evidence type="ECO:0000305" key="7"/>
<evidence type="ECO:0000312" key="8">
    <source>
        <dbReference type="EMBL" id="EAL70189.1"/>
    </source>
</evidence>
<dbReference type="EC" id="2.7.11.1"/>
<dbReference type="EMBL" id="AAFI02000012">
    <property type="protein sequence ID" value="EAL70189.1"/>
    <property type="molecule type" value="Genomic_DNA"/>
</dbReference>
<dbReference type="RefSeq" id="XP_643908.1">
    <property type="nucleotide sequence ID" value="XM_638816.1"/>
</dbReference>
<dbReference type="SMR" id="Q86IX1"/>
<dbReference type="FunCoup" id="Q86IX1">
    <property type="interactions" value="38"/>
</dbReference>
<dbReference type="STRING" id="44689.Q86IX1"/>
<dbReference type="GlyGen" id="Q86IX1">
    <property type="glycosylation" value="1 site"/>
</dbReference>
<dbReference type="PaxDb" id="44689-DDB0216377"/>
<dbReference type="EnsemblProtists" id="EAL70189">
    <property type="protein sequence ID" value="EAL70189"/>
    <property type="gene ID" value="DDB_G0274593"/>
</dbReference>
<dbReference type="GeneID" id="8619335"/>
<dbReference type="KEGG" id="ddi:DDB_G0274593"/>
<dbReference type="dictyBase" id="DDB_G0274593">
    <property type="gene designation" value="dst1"/>
</dbReference>
<dbReference type="VEuPathDB" id="AmoebaDB:DDB_G0274593"/>
<dbReference type="eggNOG" id="KOG0576">
    <property type="taxonomic scope" value="Eukaryota"/>
</dbReference>
<dbReference type="HOGENOM" id="CLU_000288_63_23_1"/>
<dbReference type="InParanoid" id="Q86IX1"/>
<dbReference type="OMA" id="VIQENKY"/>
<dbReference type="PhylomeDB" id="Q86IX1"/>
<dbReference type="Reactome" id="R-DDI-9013149">
    <property type="pathway name" value="RAC1 GTPase cycle"/>
</dbReference>
<dbReference type="Reactome" id="R-DDI-9013404">
    <property type="pathway name" value="RAC2 GTPase cycle"/>
</dbReference>
<dbReference type="Reactome" id="R-DDI-9013423">
    <property type="pathway name" value="RAC3 GTPase cycle"/>
</dbReference>
<dbReference type="PRO" id="PR:Q86IX1"/>
<dbReference type="Proteomes" id="UP000002195">
    <property type="component" value="Chromosome 2"/>
</dbReference>
<dbReference type="GO" id="GO:0005737">
    <property type="term" value="C:cytoplasm"/>
    <property type="evidence" value="ECO:0000250"/>
    <property type="project" value="dictyBase"/>
</dbReference>
<dbReference type="GO" id="GO:0005634">
    <property type="term" value="C:nucleus"/>
    <property type="evidence" value="ECO:0000250"/>
    <property type="project" value="dictyBase"/>
</dbReference>
<dbReference type="GO" id="GO:0005524">
    <property type="term" value="F:ATP binding"/>
    <property type="evidence" value="ECO:0007669"/>
    <property type="project" value="UniProtKB-KW"/>
</dbReference>
<dbReference type="GO" id="GO:0046872">
    <property type="term" value="F:metal ion binding"/>
    <property type="evidence" value="ECO:0007669"/>
    <property type="project" value="UniProtKB-KW"/>
</dbReference>
<dbReference type="GO" id="GO:0106310">
    <property type="term" value="F:protein serine kinase activity"/>
    <property type="evidence" value="ECO:0007669"/>
    <property type="project" value="RHEA"/>
</dbReference>
<dbReference type="GO" id="GO:0004674">
    <property type="term" value="F:protein serine/threonine kinase activity"/>
    <property type="evidence" value="ECO:0000250"/>
    <property type="project" value="dictyBase"/>
</dbReference>
<dbReference type="GO" id="GO:0035556">
    <property type="term" value="P:intracellular signal transduction"/>
    <property type="evidence" value="ECO:0000318"/>
    <property type="project" value="GO_Central"/>
</dbReference>
<dbReference type="GO" id="GO:0012501">
    <property type="term" value="P:programmed cell death"/>
    <property type="evidence" value="ECO:0000250"/>
    <property type="project" value="dictyBase"/>
</dbReference>
<dbReference type="GO" id="GO:0006468">
    <property type="term" value="P:protein phosphorylation"/>
    <property type="evidence" value="ECO:0000250"/>
    <property type="project" value="dictyBase"/>
</dbReference>
<dbReference type="GO" id="GO:0043408">
    <property type="term" value="P:regulation of MAPK cascade"/>
    <property type="evidence" value="ECO:0000318"/>
    <property type="project" value="GO_Central"/>
</dbReference>
<dbReference type="GO" id="GO:0007165">
    <property type="term" value="P:signal transduction"/>
    <property type="evidence" value="ECO:0000250"/>
    <property type="project" value="dictyBase"/>
</dbReference>
<dbReference type="CDD" id="cd06613">
    <property type="entry name" value="STKc_MAP4K3_like"/>
    <property type="match status" value="1"/>
</dbReference>
<dbReference type="FunFam" id="1.10.510.10:FF:000207">
    <property type="entry name" value="serine/threonine-protein kinase dst1 isoform X1"/>
    <property type="match status" value="1"/>
</dbReference>
<dbReference type="Gene3D" id="1.10.510.10">
    <property type="entry name" value="Transferase(Phosphotransferase) domain 1"/>
    <property type="match status" value="1"/>
</dbReference>
<dbReference type="InterPro" id="IPR011009">
    <property type="entry name" value="Kinase-like_dom_sf"/>
</dbReference>
<dbReference type="InterPro" id="IPR000719">
    <property type="entry name" value="Prot_kinase_dom"/>
</dbReference>
<dbReference type="InterPro" id="IPR017441">
    <property type="entry name" value="Protein_kinase_ATP_BS"/>
</dbReference>
<dbReference type="InterPro" id="IPR050629">
    <property type="entry name" value="STE20/SPS1-PAK"/>
</dbReference>
<dbReference type="PANTHER" id="PTHR48012:SF10">
    <property type="entry name" value="FI20177P1"/>
    <property type="match status" value="1"/>
</dbReference>
<dbReference type="PANTHER" id="PTHR48012">
    <property type="entry name" value="STERILE20-LIKE KINASE, ISOFORM B-RELATED"/>
    <property type="match status" value="1"/>
</dbReference>
<dbReference type="Pfam" id="PF00069">
    <property type="entry name" value="Pkinase"/>
    <property type="match status" value="1"/>
</dbReference>
<dbReference type="SMART" id="SM00220">
    <property type="entry name" value="S_TKc"/>
    <property type="match status" value="1"/>
</dbReference>
<dbReference type="SUPFAM" id="SSF56112">
    <property type="entry name" value="Protein kinase-like (PK-like)"/>
    <property type="match status" value="1"/>
</dbReference>
<dbReference type="PROSITE" id="PS00107">
    <property type="entry name" value="PROTEIN_KINASE_ATP"/>
    <property type="match status" value="1"/>
</dbReference>
<dbReference type="PROSITE" id="PS50011">
    <property type="entry name" value="PROTEIN_KINASE_DOM"/>
    <property type="match status" value="1"/>
</dbReference>